<organism>
    <name type="scientific">Clostridium beijerinckii (strain ATCC 51743 / NCIMB 8052)</name>
    <name type="common">Clostridium acetobutylicum</name>
    <dbReference type="NCBI Taxonomy" id="290402"/>
    <lineage>
        <taxon>Bacteria</taxon>
        <taxon>Bacillati</taxon>
        <taxon>Bacillota</taxon>
        <taxon>Clostridia</taxon>
        <taxon>Eubacteriales</taxon>
        <taxon>Clostridiaceae</taxon>
        <taxon>Clostridium</taxon>
    </lineage>
</organism>
<sequence length="198" mass="21894">MYEYIKGKYIGINKDYVIVENSGIGYKIFTSGATMSSMPKNGEEIMLYLEQIVREDFIGLYGFDSKEELEMFKLLLTVSGVGPKAALSLLSISRVNNLKYAIMIGDEKHICRGVGIGKKTAARIILEIKDKLKPDELVDSSLEIDTKDNENVMALSEALSALIALGYSEKEAESVLKKIDKNDSVENIIKNALKALMG</sequence>
<accession>A6LTM6</accession>
<gene>
    <name evidence="1" type="primary">ruvA</name>
    <name type="ordered locus">Cbei_1530</name>
</gene>
<reference key="1">
    <citation type="submission" date="2007-06" db="EMBL/GenBank/DDBJ databases">
        <title>Complete sequence of Clostridium beijerinckii NCIMB 8052.</title>
        <authorList>
            <consortium name="US DOE Joint Genome Institute"/>
            <person name="Copeland A."/>
            <person name="Lucas S."/>
            <person name="Lapidus A."/>
            <person name="Barry K."/>
            <person name="Detter J.C."/>
            <person name="Glavina del Rio T."/>
            <person name="Hammon N."/>
            <person name="Israni S."/>
            <person name="Dalin E."/>
            <person name="Tice H."/>
            <person name="Pitluck S."/>
            <person name="Sims D."/>
            <person name="Brettin T."/>
            <person name="Bruce D."/>
            <person name="Tapia R."/>
            <person name="Brainard J."/>
            <person name="Schmutz J."/>
            <person name="Larimer F."/>
            <person name="Land M."/>
            <person name="Hauser L."/>
            <person name="Kyrpides N."/>
            <person name="Mikhailova N."/>
            <person name="Bennet G."/>
            <person name="Cann I."/>
            <person name="Chen J.-S."/>
            <person name="Contreras A.L."/>
            <person name="Jones D."/>
            <person name="Kashket E."/>
            <person name="Mitchell W."/>
            <person name="Stoddard S."/>
            <person name="Schwarz W."/>
            <person name="Qureshi N."/>
            <person name="Young M."/>
            <person name="Shi Z."/>
            <person name="Ezeji T."/>
            <person name="White B."/>
            <person name="Blaschek H."/>
            <person name="Richardson P."/>
        </authorList>
    </citation>
    <scope>NUCLEOTIDE SEQUENCE [LARGE SCALE GENOMIC DNA]</scope>
    <source>
        <strain>ATCC 51743 / NCIMB 8052</strain>
    </source>
</reference>
<protein>
    <recommendedName>
        <fullName evidence="1">Holliday junction branch migration complex subunit RuvA</fullName>
    </recommendedName>
</protein>
<dbReference type="EMBL" id="CP000721">
    <property type="protein sequence ID" value="ABR33706.1"/>
    <property type="molecule type" value="Genomic_DNA"/>
</dbReference>
<dbReference type="RefSeq" id="WP_011968858.1">
    <property type="nucleotide sequence ID" value="NC_009617.1"/>
</dbReference>
<dbReference type="SMR" id="A6LTM6"/>
<dbReference type="KEGG" id="cbe:Cbei_1530"/>
<dbReference type="eggNOG" id="COG0632">
    <property type="taxonomic scope" value="Bacteria"/>
</dbReference>
<dbReference type="HOGENOM" id="CLU_087936_3_0_9"/>
<dbReference type="Proteomes" id="UP000000565">
    <property type="component" value="Chromosome"/>
</dbReference>
<dbReference type="GO" id="GO:0005737">
    <property type="term" value="C:cytoplasm"/>
    <property type="evidence" value="ECO:0007669"/>
    <property type="project" value="UniProtKB-SubCell"/>
</dbReference>
<dbReference type="GO" id="GO:0009379">
    <property type="term" value="C:Holliday junction helicase complex"/>
    <property type="evidence" value="ECO:0007669"/>
    <property type="project" value="InterPro"/>
</dbReference>
<dbReference type="GO" id="GO:0048476">
    <property type="term" value="C:Holliday junction resolvase complex"/>
    <property type="evidence" value="ECO:0007669"/>
    <property type="project" value="UniProtKB-UniRule"/>
</dbReference>
<dbReference type="GO" id="GO:0005524">
    <property type="term" value="F:ATP binding"/>
    <property type="evidence" value="ECO:0007669"/>
    <property type="project" value="InterPro"/>
</dbReference>
<dbReference type="GO" id="GO:0000400">
    <property type="term" value="F:four-way junction DNA binding"/>
    <property type="evidence" value="ECO:0007669"/>
    <property type="project" value="UniProtKB-UniRule"/>
</dbReference>
<dbReference type="GO" id="GO:0009378">
    <property type="term" value="F:four-way junction helicase activity"/>
    <property type="evidence" value="ECO:0007669"/>
    <property type="project" value="InterPro"/>
</dbReference>
<dbReference type="GO" id="GO:0006310">
    <property type="term" value="P:DNA recombination"/>
    <property type="evidence" value="ECO:0007669"/>
    <property type="project" value="UniProtKB-UniRule"/>
</dbReference>
<dbReference type="GO" id="GO:0006281">
    <property type="term" value="P:DNA repair"/>
    <property type="evidence" value="ECO:0007669"/>
    <property type="project" value="UniProtKB-UniRule"/>
</dbReference>
<dbReference type="CDD" id="cd14332">
    <property type="entry name" value="UBA_RuvA_C"/>
    <property type="match status" value="1"/>
</dbReference>
<dbReference type="Gene3D" id="1.10.150.20">
    <property type="entry name" value="5' to 3' exonuclease, C-terminal subdomain"/>
    <property type="match status" value="1"/>
</dbReference>
<dbReference type="Gene3D" id="1.10.8.10">
    <property type="entry name" value="DNA helicase RuvA subunit, C-terminal domain"/>
    <property type="match status" value="1"/>
</dbReference>
<dbReference type="Gene3D" id="2.40.50.140">
    <property type="entry name" value="Nucleic acid-binding proteins"/>
    <property type="match status" value="1"/>
</dbReference>
<dbReference type="HAMAP" id="MF_00031">
    <property type="entry name" value="DNA_HJ_migration_RuvA"/>
    <property type="match status" value="1"/>
</dbReference>
<dbReference type="InterPro" id="IPR013849">
    <property type="entry name" value="DNA_helicase_Holl-junc_RuvA_I"/>
</dbReference>
<dbReference type="InterPro" id="IPR012340">
    <property type="entry name" value="NA-bd_OB-fold"/>
</dbReference>
<dbReference type="InterPro" id="IPR000085">
    <property type="entry name" value="RuvA"/>
</dbReference>
<dbReference type="InterPro" id="IPR010994">
    <property type="entry name" value="RuvA_2-like"/>
</dbReference>
<dbReference type="InterPro" id="IPR011114">
    <property type="entry name" value="RuvA_C"/>
</dbReference>
<dbReference type="InterPro" id="IPR036267">
    <property type="entry name" value="RuvA_C_sf"/>
</dbReference>
<dbReference type="NCBIfam" id="TIGR00084">
    <property type="entry name" value="ruvA"/>
    <property type="match status" value="1"/>
</dbReference>
<dbReference type="Pfam" id="PF14520">
    <property type="entry name" value="HHH_5"/>
    <property type="match status" value="1"/>
</dbReference>
<dbReference type="Pfam" id="PF07499">
    <property type="entry name" value="RuvA_C"/>
    <property type="match status" value="1"/>
</dbReference>
<dbReference type="Pfam" id="PF01330">
    <property type="entry name" value="RuvA_N"/>
    <property type="match status" value="1"/>
</dbReference>
<dbReference type="SUPFAM" id="SSF46929">
    <property type="entry name" value="DNA helicase RuvA subunit, C-terminal domain"/>
    <property type="match status" value="1"/>
</dbReference>
<dbReference type="SUPFAM" id="SSF50249">
    <property type="entry name" value="Nucleic acid-binding proteins"/>
    <property type="match status" value="1"/>
</dbReference>
<dbReference type="SUPFAM" id="SSF47781">
    <property type="entry name" value="RuvA domain 2-like"/>
    <property type="match status" value="1"/>
</dbReference>
<keyword id="KW-0963">Cytoplasm</keyword>
<keyword id="KW-0227">DNA damage</keyword>
<keyword id="KW-0233">DNA recombination</keyword>
<keyword id="KW-0234">DNA repair</keyword>
<keyword id="KW-0238">DNA-binding</keyword>
<proteinExistence type="inferred from homology"/>
<name>RUVA_CLOB8</name>
<feature type="chain" id="PRO_1000074416" description="Holliday junction branch migration complex subunit RuvA">
    <location>
        <begin position="1"/>
        <end position="198"/>
    </location>
</feature>
<feature type="region of interest" description="Domain I" evidence="1">
    <location>
        <begin position="1"/>
        <end position="64"/>
    </location>
</feature>
<feature type="region of interest" description="Domain II" evidence="1">
    <location>
        <begin position="65"/>
        <end position="143"/>
    </location>
</feature>
<feature type="region of interest" description="Flexible linker" evidence="1">
    <location>
        <begin position="144"/>
        <end position="149"/>
    </location>
</feature>
<feature type="region of interest" description="Domain III" evidence="1">
    <location>
        <begin position="150"/>
        <end position="198"/>
    </location>
</feature>
<comment type="function">
    <text evidence="1">The RuvA-RuvB-RuvC complex processes Holliday junction (HJ) DNA during genetic recombination and DNA repair, while the RuvA-RuvB complex plays an important role in the rescue of blocked DNA replication forks via replication fork reversal (RFR). RuvA specifically binds to HJ cruciform DNA, conferring on it an open structure. The RuvB hexamer acts as an ATP-dependent pump, pulling dsDNA into and through the RuvAB complex. HJ branch migration allows RuvC to scan DNA until it finds its consensus sequence, where it cleaves and resolves the cruciform DNA.</text>
</comment>
<comment type="subunit">
    <text evidence="1">Homotetramer. Forms an RuvA(8)-RuvB(12)-Holliday junction (HJ) complex. HJ DNA is sandwiched between 2 RuvA tetramers; dsDNA enters through RuvA and exits via RuvB. An RuvB hexamer assembles on each DNA strand where it exits the tetramer. Each RuvB hexamer is contacted by two RuvA subunits (via domain III) on 2 adjacent RuvB subunits; this complex drives branch migration. In the full resolvosome a probable DNA-RuvA(4)-RuvB(12)-RuvC(2) complex forms which resolves the HJ.</text>
</comment>
<comment type="subcellular location">
    <subcellularLocation>
        <location evidence="1">Cytoplasm</location>
    </subcellularLocation>
</comment>
<comment type="domain">
    <text evidence="1">Has three domains with a flexible linker between the domains II and III and assumes an 'L' shape. Domain III is highly mobile and contacts RuvB.</text>
</comment>
<comment type="similarity">
    <text evidence="1">Belongs to the RuvA family.</text>
</comment>
<evidence type="ECO:0000255" key="1">
    <source>
        <dbReference type="HAMAP-Rule" id="MF_00031"/>
    </source>
</evidence>